<protein>
    <recommendedName>
        <fullName evidence="1">Heme oxygenase (staphylobilin-producing)</fullName>
        <ecNumber evidence="1">1.14.99.48</ecNumber>
    </recommendedName>
    <alternativeName>
        <fullName evidence="1">Heme-degrading monooxygenase</fullName>
    </alternativeName>
    <alternativeName>
        <fullName evidence="1">Iron-regulated surface determinant</fullName>
    </alternativeName>
    <alternativeName>
        <fullName evidence="1">Iron-responsive surface determinant</fullName>
    </alternativeName>
</protein>
<gene>
    <name type="primary">isdG</name>
    <name type="ordered locus">SSP0713</name>
</gene>
<accession>Q49ZB8</accession>
<dbReference type="EC" id="1.14.99.48" evidence="1"/>
<dbReference type="EMBL" id="AP008934">
    <property type="protein sequence ID" value="BAE17858.1"/>
    <property type="molecule type" value="Genomic_DNA"/>
</dbReference>
<dbReference type="RefSeq" id="WP_011302628.1">
    <property type="nucleotide sequence ID" value="NZ_MTGA01000036.1"/>
</dbReference>
<dbReference type="SMR" id="Q49ZB8"/>
<dbReference type="GeneID" id="3615914"/>
<dbReference type="KEGG" id="ssp:SSP0713"/>
<dbReference type="PATRIC" id="fig|342451.11.peg.715"/>
<dbReference type="eggNOG" id="COG2329">
    <property type="taxonomic scope" value="Bacteria"/>
</dbReference>
<dbReference type="HOGENOM" id="CLU_141544_2_1_9"/>
<dbReference type="OrthoDB" id="384737at2"/>
<dbReference type="Proteomes" id="UP000006371">
    <property type="component" value="Chromosome"/>
</dbReference>
<dbReference type="GO" id="GO:0005737">
    <property type="term" value="C:cytoplasm"/>
    <property type="evidence" value="ECO:0007669"/>
    <property type="project" value="UniProtKB-SubCell"/>
</dbReference>
<dbReference type="GO" id="GO:0020037">
    <property type="term" value="F:heme binding"/>
    <property type="evidence" value="ECO:0007669"/>
    <property type="project" value="UniProtKB-UniRule"/>
</dbReference>
<dbReference type="GO" id="GO:0004392">
    <property type="term" value="F:heme oxygenase (decyclizing) activity"/>
    <property type="evidence" value="ECO:0007669"/>
    <property type="project" value="UniProtKB-UniRule"/>
</dbReference>
<dbReference type="GO" id="GO:0005506">
    <property type="term" value="F:iron ion binding"/>
    <property type="evidence" value="ECO:0007669"/>
    <property type="project" value="UniProtKB-UniRule"/>
</dbReference>
<dbReference type="GO" id="GO:0042167">
    <property type="term" value="P:heme catabolic process"/>
    <property type="evidence" value="ECO:0007669"/>
    <property type="project" value="UniProtKB-UniRule"/>
</dbReference>
<dbReference type="GO" id="GO:0033212">
    <property type="term" value="P:iron import into cell"/>
    <property type="evidence" value="ECO:0007669"/>
    <property type="project" value="InterPro"/>
</dbReference>
<dbReference type="Gene3D" id="3.30.70.100">
    <property type="match status" value="1"/>
</dbReference>
<dbReference type="HAMAP" id="MF_01272">
    <property type="entry name" value="Heme_degrading_monooxygenase"/>
    <property type="match status" value="1"/>
</dbReference>
<dbReference type="InterPro" id="IPR007138">
    <property type="entry name" value="ABM_dom"/>
</dbReference>
<dbReference type="InterPro" id="IPR011008">
    <property type="entry name" value="Dimeric_a/b-barrel"/>
</dbReference>
<dbReference type="InterPro" id="IPR050404">
    <property type="entry name" value="Heme-degrading_MO"/>
</dbReference>
<dbReference type="InterPro" id="IPR023953">
    <property type="entry name" value="IsdG"/>
</dbReference>
<dbReference type="NCBIfam" id="NF009840">
    <property type="entry name" value="PRK13315.1"/>
    <property type="match status" value="1"/>
</dbReference>
<dbReference type="PANTHER" id="PTHR34474:SF4">
    <property type="entry name" value="HEME OXYGENASE (STAPHYLOBILIN-PRODUCING) 1"/>
    <property type="match status" value="1"/>
</dbReference>
<dbReference type="PANTHER" id="PTHR34474">
    <property type="entry name" value="SIGNAL TRANSDUCTION PROTEIN TRAP"/>
    <property type="match status" value="1"/>
</dbReference>
<dbReference type="Pfam" id="PF03992">
    <property type="entry name" value="ABM"/>
    <property type="match status" value="1"/>
</dbReference>
<dbReference type="SUPFAM" id="SSF54909">
    <property type="entry name" value="Dimeric alpha+beta barrel"/>
    <property type="match status" value="1"/>
</dbReference>
<dbReference type="PROSITE" id="PS51725">
    <property type="entry name" value="ABM"/>
    <property type="match status" value="1"/>
</dbReference>
<reference key="1">
    <citation type="journal article" date="2005" name="Proc. Natl. Acad. Sci. U.S.A.">
        <title>Whole genome sequence of Staphylococcus saprophyticus reveals the pathogenesis of uncomplicated urinary tract infection.</title>
        <authorList>
            <person name="Kuroda M."/>
            <person name="Yamashita A."/>
            <person name="Hirakawa H."/>
            <person name="Kumano M."/>
            <person name="Morikawa K."/>
            <person name="Higashide M."/>
            <person name="Maruyama A."/>
            <person name="Inose Y."/>
            <person name="Matoba K."/>
            <person name="Toh H."/>
            <person name="Kuhara S."/>
            <person name="Hattori M."/>
            <person name="Ohta T."/>
        </authorList>
    </citation>
    <scope>NUCLEOTIDE SEQUENCE [LARGE SCALE GENOMIC DNA]</scope>
    <source>
        <strain>ATCC 15305 / DSM 20229 / NCIMB 8711 / NCTC 7292 / S-41</strain>
    </source>
</reference>
<organism>
    <name type="scientific">Staphylococcus saprophyticus subsp. saprophyticus (strain ATCC 15305 / DSM 20229 / NCIMB 8711 / NCTC 7292 / S-41)</name>
    <dbReference type="NCBI Taxonomy" id="342451"/>
    <lineage>
        <taxon>Bacteria</taxon>
        <taxon>Bacillati</taxon>
        <taxon>Bacillota</taxon>
        <taxon>Bacilli</taxon>
        <taxon>Bacillales</taxon>
        <taxon>Staphylococcaceae</taxon>
        <taxon>Staphylococcus</taxon>
    </lineage>
</organism>
<evidence type="ECO:0000255" key="1">
    <source>
        <dbReference type="HAMAP-Rule" id="MF_01272"/>
    </source>
</evidence>
<sequence length="104" mass="11938">MYVVTNRIDVKKGFAEKMAPKFTQGGKIQELEGFQKVEVWLIDDEADYDQMYINTWWDSEDDFKGWLKSDAFKEAHEGKSKTKSDDSPILGNKVVKANVISELS</sequence>
<comment type="function">
    <text evidence="1">Allows bacterial pathogens to use the host heme as an iron source. Catalyzes the oxidative degradation of the heme macrocyclic porphyrin ring to the oxo-bilirubin chromophore staphylobilin (a mixture of the linear tetrapyrroles 5-oxo-delta-bilirubin and 15-oxo-beta-bilirubin) in the presence of a suitable electron donor such as ascorbate or NADPH--cytochrome P450 reductase, with subsequent release of free iron.</text>
</comment>
<comment type="catalytic activity">
    <reaction evidence="1">
        <text>heme b + 5 AH2 + 4 O2 + 2 H(+) = delta-staphylobilin + Fe(2+) + formaldehyde + 5 A + 4 H2O</text>
        <dbReference type="Rhea" id="RHEA:37039"/>
        <dbReference type="ChEBI" id="CHEBI:13193"/>
        <dbReference type="ChEBI" id="CHEBI:15377"/>
        <dbReference type="ChEBI" id="CHEBI:15378"/>
        <dbReference type="ChEBI" id="CHEBI:15379"/>
        <dbReference type="ChEBI" id="CHEBI:16842"/>
        <dbReference type="ChEBI" id="CHEBI:17499"/>
        <dbReference type="ChEBI" id="CHEBI:29033"/>
        <dbReference type="ChEBI" id="CHEBI:60344"/>
        <dbReference type="ChEBI" id="CHEBI:74361"/>
        <dbReference type="EC" id="1.14.99.48"/>
    </reaction>
</comment>
<comment type="catalytic activity">
    <reaction evidence="1">
        <text>heme b + 5 AH2 + 4 O2 + 2 H(+) = beta-staphylobilin + Fe(2+) + formaldehyde + 5 A + 4 H2O</text>
        <dbReference type="Rhea" id="RHEA:37363"/>
        <dbReference type="ChEBI" id="CHEBI:13193"/>
        <dbReference type="ChEBI" id="CHEBI:15377"/>
        <dbReference type="ChEBI" id="CHEBI:15378"/>
        <dbReference type="ChEBI" id="CHEBI:15379"/>
        <dbReference type="ChEBI" id="CHEBI:16842"/>
        <dbReference type="ChEBI" id="CHEBI:17499"/>
        <dbReference type="ChEBI" id="CHEBI:29033"/>
        <dbReference type="ChEBI" id="CHEBI:60344"/>
        <dbReference type="ChEBI" id="CHEBI:74362"/>
        <dbReference type="EC" id="1.14.99.48"/>
    </reaction>
</comment>
<comment type="subunit">
    <text evidence="1">Homodimer.</text>
</comment>
<comment type="subcellular location">
    <subcellularLocation>
        <location evidence="1">Cytoplasm</location>
    </subcellularLocation>
</comment>
<comment type="similarity">
    <text evidence="1">Belongs to the antibiotic biosynthesis monooxygenase family. Heme-degrading monooxygenase IsdG subfamily.</text>
</comment>
<feature type="chain" id="PRO_0000270100" description="Heme oxygenase (staphylobilin-producing)">
    <location>
        <begin position="1"/>
        <end position="104"/>
    </location>
</feature>
<feature type="domain" description="ABM" evidence="1">
    <location>
        <begin position="2"/>
        <end position="95"/>
    </location>
</feature>
<feature type="binding site" evidence="1">
    <location>
        <position position="6"/>
    </location>
    <ligand>
        <name>Fe cation</name>
        <dbReference type="ChEBI" id="CHEBI:24875"/>
    </ligand>
</feature>
<feature type="binding site" description="axial binding residue" evidence="1">
    <location>
        <position position="76"/>
    </location>
    <ligand>
        <name>heme</name>
        <dbReference type="ChEBI" id="CHEBI:30413"/>
    </ligand>
    <ligandPart>
        <name>Fe</name>
        <dbReference type="ChEBI" id="CHEBI:18248"/>
    </ligandPart>
</feature>
<feature type="site" description="Transition state stabilizer" evidence="1">
    <location>
        <position position="66"/>
    </location>
</feature>
<proteinExistence type="inferred from homology"/>
<name>HDOX_STAS1</name>
<keyword id="KW-0963">Cytoplasm</keyword>
<keyword id="KW-0349">Heme</keyword>
<keyword id="KW-0408">Iron</keyword>
<keyword id="KW-0479">Metal-binding</keyword>
<keyword id="KW-0503">Monooxygenase</keyword>
<keyword id="KW-0560">Oxidoreductase</keyword>
<keyword id="KW-1185">Reference proteome</keyword>